<name>MANBB_ASPTN</name>
<keyword id="KW-0119">Carbohydrate metabolism</keyword>
<keyword id="KW-0325">Glycoprotein</keyword>
<keyword id="KW-0326">Glycosidase</keyword>
<keyword id="KW-0378">Hydrolase</keyword>
<keyword id="KW-0624">Polysaccharide degradation</keyword>
<keyword id="KW-1185">Reference proteome</keyword>
<comment type="function">
    <text evidence="1">Exoglycosidase that cleaves the single beta-linked mannose residue from the non-reducing end of beta-mannosidic oligosaccharides of various complexity and length. Prefers mannobiose over mannotriose and has no activity against polymeric mannan. Is also severely restricted by galactosyl substitutions at the +1 subsite (By similarity).</text>
</comment>
<comment type="catalytic activity">
    <reaction>
        <text>Hydrolysis of terminal, non-reducing beta-D-mannose residues in beta-D-mannosides.</text>
        <dbReference type="EC" id="3.2.1.25"/>
    </reaction>
</comment>
<comment type="pathway">
    <text>Glycan metabolism; N-glycan degradation.</text>
</comment>
<comment type="miscellaneous">
    <text evidence="1">In contrast to clade A beta-mannosidases, which are likely secreted, clade B proteins appear to be intracellular.</text>
</comment>
<comment type="similarity">
    <text evidence="3">Belongs to the glycosyl hydrolase 2 family. Beta-mannosidase B subfamily.</text>
</comment>
<comment type="sequence caution" evidence="3">
    <conflict type="erroneous gene model prediction">
        <sequence resource="EMBL-CDS" id="EAU30816"/>
    </conflict>
</comment>
<evidence type="ECO:0000250" key="1"/>
<evidence type="ECO:0000255" key="2"/>
<evidence type="ECO:0000305" key="3"/>
<dbReference type="EC" id="3.2.1.25"/>
<dbReference type="EMBL" id="CH476606">
    <property type="protein sequence ID" value="EAU30816.1"/>
    <property type="status" value="ALT_SEQ"/>
    <property type="molecule type" value="Genomic_DNA"/>
</dbReference>
<dbReference type="RefSeq" id="XP_001217270.1">
    <property type="nucleotide sequence ID" value="XM_001217269.1"/>
</dbReference>
<dbReference type="SMR" id="Q0CCA0"/>
<dbReference type="STRING" id="341663.Q0CCA0"/>
<dbReference type="GlyCosmos" id="Q0CCA0">
    <property type="glycosylation" value="1 site, No reported glycans"/>
</dbReference>
<dbReference type="EnsemblFungi" id="EAU30816">
    <property type="protein sequence ID" value="EAU30816"/>
    <property type="gene ID" value="ATEG_08684"/>
</dbReference>
<dbReference type="GeneID" id="4323103"/>
<dbReference type="eggNOG" id="KOG2230">
    <property type="taxonomic scope" value="Eukaryota"/>
</dbReference>
<dbReference type="eggNOG" id="KOG3066">
    <property type="taxonomic scope" value="Eukaryota"/>
</dbReference>
<dbReference type="OrthoDB" id="2866996at2759"/>
<dbReference type="UniPathway" id="UPA00280"/>
<dbReference type="Proteomes" id="UP000007963">
    <property type="component" value="Unassembled WGS sequence"/>
</dbReference>
<dbReference type="GO" id="GO:0004567">
    <property type="term" value="F:beta-mannosidase activity"/>
    <property type="evidence" value="ECO:0007669"/>
    <property type="project" value="UniProtKB-EC"/>
</dbReference>
<dbReference type="GO" id="GO:0006516">
    <property type="term" value="P:glycoprotein catabolic process"/>
    <property type="evidence" value="ECO:0007669"/>
    <property type="project" value="TreeGrafter"/>
</dbReference>
<dbReference type="GO" id="GO:0000272">
    <property type="term" value="P:polysaccharide catabolic process"/>
    <property type="evidence" value="ECO:0007669"/>
    <property type="project" value="UniProtKB-KW"/>
</dbReference>
<dbReference type="FunFam" id="2.60.120.260:FF:000118">
    <property type="entry name" value="Beta-mannosidase B"/>
    <property type="match status" value="1"/>
</dbReference>
<dbReference type="FunFam" id="3.20.20.80:FF:000050">
    <property type="entry name" value="Beta-mannosidase B"/>
    <property type="match status" value="1"/>
</dbReference>
<dbReference type="FunFam" id="2.60.40.10:FF:001725">
    <property type="entry name" value="Exo-beta-D-glucosaminidase"/>
    <property type="match status" value="1"/>
</dbReference>
<dbReference type="Gene3D" id="2.60.120.260">
    <property type="entry name" value="Galactose-binding domain-like"/>
    <property type="match status" value="1"/>
</dbReference>
<dbReference type="Gene3D" id="3.20.20.80">
    <property type="entry name" value="Glycosidases"/>
    <property type="match status" value="1"/>
</dbReference>
<dbReference type="Gene3D" id="2.60.40.10">
    <property type="entry name" value="Immunoglobulins"/>
    <property type="match status" value="1"/>
</dbReference>
<dbReference type="InterPro" id="IPR036156">
    <property type="entry name" value="Beta-gal/glucu_dom_sf"/>
</dbReference>
<dbReference type="InterPro" id="IPR054593">
    <property type="entry name" value="Beta-mannosidase-like_N2"/>
</dbReference>
<dbReference type="InterPro" id="IPR050887">
    <property type="entry name" value="Beta-mannosidase_GH2"/>
</dbReference>
<dbReference type="InterPro" id="IPR008979">
    <property type="entry name" value="Galactose-bd-like_sf"/>
</dbReference>
<dbReference type="InterPro" id="IPR006102">
    <property type="entry name" value="Glyco_hydro_2_Ig-like"/>
</dbReference>
<dbReference type="InterPro" id="IPR017853">
    <property type="entry name" value="Glycoside_hydrolase_SF"/>
</dbReference>
<dbReference type="InterPro" id="IPR013783">
    <property type="entry name" value="Ig-like_fold"/>
</dbReference>
<dbReference type="InterPro" id="IPR041447">
    <property type="entry name" value="Mannosidase_ig"/>
</dbReference>
<dbReference type="PANTHER" id="PTHR43730">
    <property type="entry name" value="BETA-MANNOSIDASE"/>
    <property type="match status" value="1"/>
</dbReference>
<dbReference type="PANTHER" id="PTHR43730:SF1">
    <property type="entry name" value="BETA-MANNOSIDASE"/>
    <property type="match status" value="1"/>
</dbReference>
<dbReference type="Pfam" id="PF00703">
    <property type="entry name" value="Glyco_hydro_2"/>
    <property type="match status" value="1"/>
</dbReference>
<dbReference type="Pfam" id="PF22666">
    <property type="entry name" value="Glyco_hydro_2_N2"/>
    <property type="match status" value="1"/>
</dbReference>
<dbReference type="Pfam" id="PF17786">
    <property type="entry name" value="Mannosidase_ig"/>
    <property type="match status" value="1"/>
</dbReference>
<dbReference type="SUPFAM" id="SSF51445">
    <property type="entry name" value="(Trans)glycosidases"/>
    <property type="match status" value="1"/>
</dbReference>
<dbReference type="SUPFAM" id="SSF49303">
    <property type="entry name" value="beta-Galactosidase/glucuronidase domain"/>
    <property type="match status" value="2"/>
</dbReference>
<dbReference type="SUPFAM" id="SSF49785">
    <property type="entry name" value="Galactose-binding domain-like"/>
    <property type="match status" value="1"/>
</dbReference>
<protein>
    <recommendedName>
        <fullName>Beta-mannosidase B</fullName>
        <ecNumber>3.2.1.25</ecNumber>
    </recommendedName>
    <alternativeName>
        <fullName>Mannanase B</fullName>
        <shortName>Mannase B</shortName>
    </alternativeName>
</protein>
<gene>
    <name type="primary">mndB</name>
    <name type="ORF">ATEG_08684</name>
</gene>
<sequence>MASFFQQSLATGWSFKDAEDNSAEAWMPVAQVPSVVHQDLIANNKLQDPYVGFRELDARWVNEKSWTYRTVFQKPAVPAGSSVILAFDGLDTFAKVKLNGNVILESNNMFLAHRIDVTKALGADGDHVLEIDFDCAMLRARELRAKDPQHKWVGFNGDPARMGVRKAQYHWGWDWGPVLMTAGIWRDVRLEVYTARVADLWTETDLAVDHHAAQISAFAQVEGAISSSKVNFILSLHGQEVARAVAEPQDQVAKVAFDVQQPSLWWPNGYGDPTLYEISATLDQDGATVHQISKKIGIRTAEVVQRPDKHGKSFFFRINGVDIFCGGSCWIPADNLLPSISAERYRKWIELMVHGRQVMIRVWGGGCYEDDSFYQACDELGVMVWQDFMFGCGNYPTWPEMLESVEKEAIYNVRRLRHHPSIVVYVGNNEDYQVQEQQGLTYNFEDKDPQNWLKSDFPARYIYEKILPEVVQRYSPSTFYHPGSPWGDGKITSDPTVGDMHQWNVWHGTQEKYQIFDTLGGRFNSEFGMEAFPHMSTIEYFVENEKDKYPQSHVLDFHNKADGHERRIATYLVENLRTATDLETYIYLTQVVQAETMMFGYRGWRRQWGDERHCGGALLWQLNDCWPTISWAIVDYFLRPKPAFYAVARVLNPIAVGVRREHHDWSVTHAQPPKKSKFELWVASNLQKETRGMVELKFLSVDTGREIRERIVREDVIIVPNGTTDIIVDGVIDHQEYAEPHVLAARLWVDGKIVARDVDWPQPFKYLDLSGRGLEVKTVSTSDDQQTLLISAQKPVKCLVFEERDGVRVSDSAMDIVPGDEQTVTITGLKADAPPLKYKYLGQ</sequence>
<feature type="chain" id="PRO_0000394657" description="Beta-mannosidase B">
    <location>
        <begin position="1"/>
        <end position="843"/>
    </location>
</feature>
<feature type="active site" description="Proton donor" evidence="1">
    <location>
        <position position="430"/>
    </location>
</feature>
<feature type="glycosylation site" description="N-linked (GlcNAc...) asparagine" evidence="2">
    <location>
        <position position="721"/>
    </location>
</feature>
<accession>Q0CCA0</accession>
<organism>
    <name type="scientific">Aspergillus terreus (strain NIH 2624 / FGSC A1156)</name>
    <dbReference type="NCBI Taxonomy" id="341663"/>
    <lineage>
        <taxon>Eukaryota</taxon>
        <taxon>Fungi</taxon>
        <taxon>Dikarya</taxon>
        <taxon>Ascomycota</taxon>
        <taxon>Pezizomycotina</taxon>
        <taxon>Eurotiomycetes</taxon>
        <taxon>Eurotiomycetidae</taxon>
        <taxon>Eurotiales</taxon>
        <taxon>Aspergillaceae</taxon>
        <taxon>Aspergillus</taxon>
        <taxon>Aspergillus subgen. Circumdati</taxon>
    </lineage>
</organism>
<proteinExistence type="inferred from homology"/>
<reference key="1">
    <citation type="submission" date="2005-09" db="EMBL/GenBank/DDBJ databases">
        <title>Annotation of the Aspergillus terreus NIH2624 genome.</title>
        <authorList>
            <person name="Birren B.W."/>
            <person name="Lander E.S."/>
            <person name="Galagan J.E."/>
            <person name="Nusbaum C."/>
            <person name="Devon K."/>
            <person name="Henn M."/>
            <person name="Ma L.-J."/>
            <person name="Jaffe D.B."/>
            <person name="Butler J."/>
            <person name="Alvarez P."/>
            <person name="Gnerre S."/>
            <person name="Grabherr M."/>
            <person name="Kleber M."/>
            <person name="Mauceli E.W."/>
            <person name="Brockman W."/>
            <person name="Rounsley S."/>
            <person name="Young S.K."/>
            <person name="LaButti K."/>
            <person name="Pushparaj V."/>
            <person name="DeCaprio D."/>
            <person name="Crawford M."/>
            <person name="Koehrsen M."/>
            <person name="Engels R."/>
            <person name="Montgomery P."/>
            <person name="Pearson M."/>
            <person name="Howarth C."/>
            <person name="Larson L."/>
            <person name="Luoma S."/>
            <person name="White J."/>
            <person name="Alvarado L."/>
            <person name="Kodira C.D."/>
            <person name="Zeng Q."/>
            <person name="Oleary S."/>
            <person name="Yandava C."/>
            <person name="Denning D.W."/>
            <person name="Nierman W.C."/>
            <person name="Milne T."/>
            <person name="Madden K."/>
        </authorList>
    </citation>
    <scope>NUCLEOTIDE SEQUENCE [LARGE SCALE GENOMIC DNA]</scope>
    <source>
        <strain>NIH 2624 / FGSC A1156</strain>
    </source>
</reference>
<reference key="2">
    <citation type="journal article" date="2013" name="FEBS Lett.">
        <title>Phylogenetic analysis and substrate specificity of GH2 beta-mannosidases from Aspergillus species.</title>
        <authorList>
            <person name="Reddy S.K."/>
            <person name="Rosengren A."/>
            <person name="Klaubauf S."/>
            <person name="Kulkarni T."/>
            <person name="Karlsson E.N."/>
            <person name="de Vries R.P."/>
            <person name="Stalbrand H."/>
        </authorList>
    </citation>
    <scope>GENE MODEL REVISION</scope>
</reference>